<reference key="1">
    <citation type="journal article" date="2004" name="Am. J. Bot.">
        <title>A phylogeny of legumes (Leguminosae) based on analysis of the plastid matK gene resolves many well-supported subclades within the family.</title>
        <authorList>
            <person name="Wojciechowski M.F."/>
            <person name="Lavin M."/>
            <person name="Sanderson M.J."/>
        </authorList>
        <dbReference type="AGRICOLA" id="IND43661289"/>
    </citation>
    <scope>NUCLEOTIDE SEQUENCE [GENOMIC DNA]</scope>
</reference>
<comment type="function">
    <text evidence="1">Usually encoded in the trnK tRNA gene intron. Probably assists in splicing its own and other chloroplast group II introns.</text>
</comment>
<comment type="subcellular location">
    <subcellularLocation>
        <location>Plastid</location>
        <location>Chloroplast</location>
    </subcellularLocation>
</comment>
<comment type="similarity">
    <text evidence="1">Belongs to the intron maturase 2 family. MatK subfamily.</text>
</comment>
<evidence type="ECO:0000255" key="1">
    <source>
        <dbReference type="HAMAP-Rule" id="MF_01390"/>
    </source>
</evidence>
<feature type="chain" id="PRO_0000143787" description="Maturase K">
    <location>
        <begin position="1"/>
        <end position="504"/>
    </location>
</feature>
<organism>
    <name type="scientific">Vigna unguiculata</name>
    <name type="common">Cowpea</name>
    <dbReference type="NCBI Taxonomy" id="3917"/>
    <lineage>
        <taxon>Eukaryota</taxon>
        <taxon>Viridiplantae</taxon>
        <taxon>Streptophyta</taxon>
        <taxon>Embryophyta</taxon>
        <taxon>Tracheophyta</taxon>
        <taxon>Spermatophyta</taxon>
        <taxon>Magnoliopsida</taxon>
        <taxon>eudicotyledons</taxon>
        <taxon>Gunneridae</taxon>
        <taxon>Pentapetalae</taxon>
        <taxon>rosids</taxon>
        <taxon>fabids</taxon>
        <taxon>Fabales</taxon>
        <taxon>Fabaceae</taxon>
        <taxon>Papilionoideae</taxon>
        <taxon>50 kb inversion clade</taxon>
        <taxon>NPAAA clade</taxon>
        <taxon>indigoferoid/millettioid clade</taxon>
        <taxon>Phaseoleae</taxon>
        <taxon>Vigna</taxon>
    </lineage>
</organism>
<keyword id="KW-0150">Chloroplast</keyword>
<keyword id="KW-0507">mRNA processing</keyword>
<keyword id="KW-0934">Plastid</keyword>
<keyword id="KW-0694">RNA-binding</keyword>
<keyword id="KW-0819">tRNA processing</keyword>
<name>MATK_VIGUN</name>
<accession>Q6PP78</accession>
<gene>
    <name evidence="1" type="primary">matK</name>
</gene>
<sequence length="504" mass="61755">MEQYQAYLELRRSRYQDILYPLFFRESIYGLAYAHESFFIENVDYNNKFSLLIVKRLSTRMYQQTHFILFVNDSKKNTFVGYNYHFFSQIILEGFGIVVEILFSLQLFSSSLRGLEIVKSYKNFQSIHSIFPFFEDQLIYLNHKSDIRIPYPIHLEILVQILRYSIKDVSFFHLIRLFFYYYYNWNSLFPPKKWIFTFFSKRNRRIFLFLYNLYVWEYESIFLFLRNKSSQLQLKHFRVFFERIFFYEKIKHLVEVSTKNCSYTFFFFKDTFIHYVRYQGKSILVLKNTPFLINKWKYYFIYLWQCHFDIWAGLETIYINELSQYSFHFLGYFLSIPLNLSVVRSQMLQNSFLIKIVIKKLDTIVPIIPLMRSLAKTKFCNVMGHPISKPVWANLSDFDIIDRFLRICRNFSHYYNGSAKKKSFYQIKYILRFSCIKTLARKHKSTVRIYLKKLSSEKLLEEFFTEEDLFSLIFPRTSFTLRRFYRGRIWYLDILLRNDFVNYL</sequence>
<protein>
    <recommendedName>
        <fullName evidence="1">Maturase K</fullName>
    </recommendedName>
    <alternativeName>
        <fullName evidence="1">Intron maturase</fullName>
    </alternativeName>
</protein>
<geneLocation type="chloroplast"/>
<proteinExistence type="inferred from homology"/>
<dbReference type="EMBL" id="AY589510">
    <property type="protein sequence ID" value="AAS90849.1"/>
    <property type="molecule type" value="Genomic_DNA"/>
</dbReference>
<dbReference type="GO" id="GO:0009507">
    <property type="term" value="C:chloroplast"/>
    <property type="evidence" value="ECO:0007669"/>
    <property type="project" value="UniProtKB-SubCell"/>
</dbReference>
<dbReference type="GO" id="GO:0003723">
    <property type="term" value="F:RNA binding"/>
    <property type="evidence" value="ECO:0007669"/>
    <property type="project" value="UniProtKB-KW"/>
</dbReference>
<dbReference type="GO" id="GO:0006397">
    <property type="term" value="P:mRNA processing"/>
    <property type="evidence" value="ECO:0007669"/>
    <property type="project" value="UniProtKB-KW"/>
</dbReference>
<dbReference type="GO" id="GO:0008380">
    <property type="term" value="P:RNA splicing"/>
    <property type="evidence" value="ECO:0007669"/>
    <property type="project" value="UniProtKB-UniRule"/>
</dbReference>
<dbReference type="GO" id="GO:0008033">
    <property type="term" value="P:tRNA processing"/>
    <property type="evidence" value="ECO:0007669"/>
    <property type="project" value="UniProtKB-KW"/>
</dbReference>
<dbReference type="HAMAP" id="MF_01390">
    <property type="entry name" value="MatK"/>
    <property type="match status" value="1"/>
</dbReference>
<dbReference type="InterPro" id="IPR024937">
    <property type="entry name" value="Domain_X"/>
</dbReference>
<dbReference type="InterPro" id="IPR002866">
    <property type="entry name" value="Maturase_MatK"/>
</dbReference>
<dbReference type="InterPro" id="IPR024942">
    <property type="entry name" value="Maturase_MatK_N"/>
</dbReference>
<dbReference type="PANTHER" id="PTHR34811">
    <property type="entry name" value="MATURASE K"/>
    <property type="match status" value="1"/>
</dbReference>
<dbReference type="PANTHER" id="PTHR34811:SF1">
    <property type="entry name" value="MATURASE K"/>
    <property type="match status" value="1"/>
</dbReference>
<dbReference type="Pfam" id="PF01348">
    <property type="entry name" value="Intron_maturas2"/>
    <property type="match status" value="1"/>
</dbReference>
<dbReference type="Pfam" id="PF01824">
    <property type="entry name" value="MatK_N"/>
    <property type="match status" value="1"/>
</dbReference>